<evidence type="ECO:0000250" key="1"/>
<evidence type="ECO:0000255" key="2">
    <source>
        <dbReference type="PROSITE-ProRule" id="PRU01083"/>
    </source>
</evidence>
<evidence type="ECO:0000305" key="3"/>
<keyword id="KW-0378">Hydrolase</keyword>
<keyword id="KW-0479">Metal-binding</keyword>
<keyword id="KW-1185">Reference proteome</keyword>
<keyword id="KW-0862">Zinc</keyword>
<comment type="function">
    <text evidence="1">This enzyme scavenges exogenous and endogenous cytidine and 2'-deoxycytidine for UMP synthesis.</text>
</comment>
<comment type="catalytic activity">
    <reaction>
        <text>cytidine + H2O + H(+) = uridine + NH4(+)</text>
        <dbReference type="Rhea" id="RHEA:16069"/>
        <dbReference type="ChEBI" id="CHEBI:15377"/>
        <dbReference type="ChEBI" id="CHEBI:15378"/>
        <dbReference type="ChEBI" id="CHEBI:16704"/>
        <dbReference type="ChEBI" id="CHEBI:17562"/>
        <dbReference type="ChEBI" id="CHEBI:28938"/>
        <dbReference type="EC" id="3.5.4.5"/>
    </reaction>
</comment>
<comment type="catalytic activity">
    <reaction>
        <text>2'-deoxycytidine + H2O + H(+) = 2'-deoxyuridine + NH4(+)</text>
        <dbReference type="Rhea" id="RHEA:13433"/>
        <dbReference type="ChEBI" id="CHEBI:15377"/>
        <dbReference type="ChEBI" id="CHEBI:15378"/>
        <dbReference type="ChEBI" id="CHEBI:15698"/>
        <dbReference type="ChEBI" id="CHEBI:16450"/>
        <dbReference type="ChEBI" id="CHEBI:28938"/>
        <dbReference type="EC" id="3.5.4.5"/>
    </reaction>
</comment>
<comment type="cofactor">
    <cofactor evidence="1">
        <name>Zn(2+)</name>
        <dbReference type="ChEBI" id="CHEBI:29105"/>
    </cofactor>
    <text evidence="1">Binds 1 zinc ion.</text>
</comment>
<comment type="subunit">
    <text evidence="1">Homodimer.</text>
</comment>
<comment type="similarity">
    <text evidence="3">Belongs to the cytidine and deoxycytidylate deaminase family.</text>
</comment>
<proteinExistence type="inferred from homology"/>
<reference key="1">
    <citation type="journal article" date="1996" name="Nucleic Acids Res.">
        <title>Complete sequence analysis of the genome of the bacterium Mycoplasma pneumoniae.</title>
        <authorList>
            <person name="Himmelreich R."/>
            <person name="Hilbert H."/>
            <person name="Plagens H."/>
            <person name="Pirkl E."/>
            <person name="Li B.-C."/>
            <person name="Herrmann R."/>
        </authorList>
    </citation>
    <scope>NUCLEOTIDE SEQUENCE [LARGE SCALE GENOMIC DNA]</scope>
    <source>
        <strain>ATCC 29342 / M129 / Subtype 1</strain>
    </source>
</reference>
<protein>
    <recommendedName>
        <fullName>Cytidine deaminase</fullName>
        <shortName>CDA</shortName>
        <ecNumber>3.5.4.5</ecNumber>
    </recommendedName>
    <alternativeName>
        <fullName>Cytidine aminohydrolase</fullName>
    </alternativeName>
</protein>
<sequence>MKVDLDWVHHKLQEVVNHAYTPFSKFKVACMLVANNQAFYGVNIENASYPVTLCAERSAIANMVTSIGKATIDYVFVYFDTKTPTNSPCGMCRQNIFEFATDKTQLFCIEKDKSFKQFTIPEILKGGFRSYEQ</sequence>
<feature type="chain" id="PRO_0000171681" description="Cytidine deaminase">
    <location>
        <begin position="1"/>
        <end position="133"/>
    </location>
</feature>
<feature type="domain" description="CMP/dCMP-type deaminase" evidence="2">
    <location>
        <begin position="3"/>
        <end position="131"/>
    </location>
</feature>
<feature type="active site" description="Proton donor" evidence="1">
    <location>
        <position position="56"/>
    </location>
</feature>
<feature type="binding site" evidence="1">
    <location>
        <begin position="43"/>
        <end position="45"/>
    </location>
    <ligand>
        <name>substrate</name>
    </ligand>
</feature>
<feature type="binding site" evidence="1">
    <location>
        <position position="54"/>
    </location>
    <ligand>
        <name>Zn(2+)</name>
        <dbReference type="ChEBI" id="CHEBI:29105"/>
        <note>catalytic</note>
    </ligand>
</feature>
<feature type="binding site" evidence="1">
    <location>
        <position position="89"/>
    </location>
    <ligand>
        <name>Zn(2+)</name>
        <dbReference type="ChEBI" id="CHEBI:29105"/>
        <note>catalytic</note>
    </ligand>
</feature>
<feature type="binding site" evidence="1">
    <location>
        <position position="92"/>
    </location>
    <ligand>
        <name>Zn(2+)</name>
        <dbReference type="ChEBI" id="CHEBI:29105"/>
        <note>catalytic</note>
    </ligand>
</feature>
<name>CDD_MYCPN</name>
<gene>
    <name type="primary">cdd</name>
    <name type="ordered locus">MPN_065</name>
    <name type="ORF">MP089</name>
</gene>
<organism>
    <name type="scientific">Mycoplasma pneumoniae (strain ATCC 29342 / M129 / Subtype 1)</name>
    <name type="common">Mycoplasmoides pneumoniae</name>
    <dbReference type="NCBI Taxonomy" id="272634"/>
    <lineage>
        <taxon>Bacteria</taxon>
        <taxon>Bacillati</taxon>
        <taxon>Mycoplasmatota</taxon>
        <taxon>Mycoplasmoidales</taxon>
        <taxon>Mycoplasmoidaceae</taxon>
        <taxon>Mycoplasmoides</taxon>
    </lineage>
</organism>
<dbReference type="EC" id="3.5.4.5"/>
<dbReference type="EMBL" id="U00089">
    <property type="protein sequence ID" value="AAB95737.1"/>
    <property type="molecule type" value="Genomic_DNA"/>
</dbReference>
<dbReference type="PIR" id="S73415">
    <property type="entry name" value="S73415"/>
</dbReference>
<dbReference type="RefSeq" id="NP_109753.1">
    <property type="nucleotide sequence ID" value="NC_000912.1"/>
</dbReference>
<dbReference type="RefSeq" id="WP_010874422.1">
    <property type="nucleotide sequence ID" value="NZ_OU342337.1"/>
</dbReference>
<dbReference type="SMR" id="P75051"/>
<dbReference type="IntAct" id="P75051">
    <property type="interactions" value="1"/>
</dbReference>
<dbReference type="STRING" id="272634.MPN_065"/>
<dbReference type="EnsemblBacteria" id="AAB95737">
    <property type="protein sequence ID" value="AAB95737"/>
    <property type="gene ID" value="MPN_065"/>
</dbReference>
<dbReference type="GeneID" id="66609293"/>
<dbReference type="KEGG" id="mpn:MPN_065"/>
<dbReference type="PATRIC" id="fig|272634.6.peg.66"/>
<dbReference type="HOGENOM" id="CLU_097262_2_2_14"/>
<dbReference type="OrthoDB" id="9795347at2"/>
<dbReference type="BioCyc" id="MPNE272634:G1GJ3-101-MONOMER"/>
<dbReference type="Proteomes" id="UP000000808">
    <property type="component" value="Chromosome"/>
</dbReference>
<dbReference type="GO" id="GO:0005829">
    <property type="term" value="C:cytosol"/>
    <property type="evidence" value="ECO:0007669"/>
    <property type="project" value="TreeGrafter"/>
</dbReference>
<dbReference type="GO" id="GO:0004126">
    <property type="term" value="F:cytidine deaminase activity"/>
    <property type="evidence" value="ECO:0007669"/>
    <property type="project" value="UniProtKB-EC"/>
</dbReference>
<dbReference type="GO" id="GO:0042802">
    <property type="term" value="F:identical protein binding"/>
    <property type="evidence" value="ECO:0007669"/>
    <property type="project" value="UniProtKB-ARBA"/>
</dbReference>
<dbReference type="GO" id="GO:0008270">
    <property type="term" value="F:zinc ion binding"/>
    <property type="evidence" value="ECO:0007669"/>
    <property type="project" value="InterPro"/>
</dbReference>
<dbReference type="GO" id="GO:0009972">
    <property type="term" value="P:cytidine deamination"/>
    <property type="evidence" value="ECO:0007669"/>
    <property type="project" value="InterPro"/>
</dbReference>
<dbReference type="CDD" id="cd01283">
    <property type="entry name" value="cytidine_deaminase"/>
    <property type="match status" value="1"/>
</dbReference>
<dbReference type="Gene3D" id="3.40.140.10">
    <property type="entry name" value="Cytidine Deaminase, domain 2"/>
    <property type="match status" value="1"/>
</dbReference>
<dbReference type="InterPro" id="IPR016192">
    <property type="entry name" value="APOBEC/CMP_deaminase_Zn-bd"/>
</dbReference>
<dbReference type="InterPro" id="IPR002125">
    <property type="entry name" value="CMP_dCMP_dom"/>
</dbReference>
<dbReference type="InterPro" id="IPR050202">
    <property type="entry name" value="Cyt/Deoxycyt_deaminase"/>
</dbReference>
<dbReference type="InterPro" id="IPR006262">
    <property type="entry name" value="Cyt_deam_tetra"/>
</dbReference>
<dbReference type="InterPro" id="IPR016193">
    <property type="entry name" value="Cytidine_deaminase-like"/>
</dbReference>
<dbReference type="NCBIfam" id="TIGR01354">
    <property type="entry name" value="cyt_deam_tetra"/>
    <property type="match status" value="1"/>
</dbReference>
<dbReference type="NCBIfam" id="NF004064">
    <property type="entry name" value="PRK05578.1"/>
    <property type="match status" value="1"/>
</dbReference>
<dbReference type="PANTHER" id="PTHR11644">
    <property type="entry name" value="CYTIDINE DEAMINASE"/>
    <property type="match status" value="1"/>
</dbReference>
<dbReference type="PANTHER" id="PTHR11644:SF2">
    <property type="entry name" value="CYTIDINE DEAMINASE"/>
    <property type="match status" value="1"/>
</dbReference>
<dbReference type="Pfam" id="PF00383">
    <property type="entry name" value="dCMP_cyt_deam_1"/>
    <property type="match status" value="1"/>
</dbReference>
<dbReference type="SUPFAM" id="SSF53927">
    <property type="entry name" value="Cytidine deaminase-like"/>
    <property type="match status" value="1"/>
</dbReference>
<dbReference type="PROSITE" id="PS00903">
    <property type="entry name" value="CYT_DCMP_DEAMINASES_1"/>
    <property type="match status" value="1"/>
</dbReference>
<dbReference type="PROSITE" id="PS51747">
    <property type="entry name" value="CYT_DCMP_DEAMINASES_2"/>
    <property type="match status" value="1"/>
</dbReference>
<accession>P75051</accession>